<comment type="function">
    <text evidence="1">Binds DNA and may function as a transcriptional repressor.</text>
</comment>
<comment type="subunit">
    <text evidence="1">Interacts with CTNNA2.</text>
</comment>
<comment type="subcellular location">
    <subcellularLocation>
        <location evidence="1">Nucleus</location>
    </subcellularLocation>
</comment>
<comment type="similarity">
    <text evidence="5">Belongs to the krueppel C2H2-type zinc-finger protein family.</text>
</comment>
<feature type="chain" id="PRO_0000383573" description="Zinc finger protein 639">
    <location>
        <begin position="1"/>
        <end position="485"/>
    </location>
</feature>
<feature type="zinc finger region" description="C2H2-type 1" evidence="3">
    <location>
        <begin position="204"/>
        <end position="227"/>
    </location>
</feature>
<feature type="zinc finger region" description="C2H2-type 2" evidence="3">
    <location>
        <begin position="233"/>
        <end position="255"/>
    </location>
</feature>
<feature type="zinc finger region" description="C2H2-type 3" evidence="3">
    <location>
        <begin position="260"/>
        <end position="283"/>
    </location>
</feature>
<feature type="zinc finger region" description="C2H2-type 4" evidence="3">
    <location>
        <begin position="289"/>
        <end position="311"/>
    </location>
</feature>
<feature type="zinc finger region" description="C2H2-type 5" evidence="3">
    <location>
        <begin position="374"/>
        <end position="397"/>
    </location>
</feature>
<feature type="zinc finger region" description="C2H2-type 6" evidence="3">
    <location>
        <begin position="403"/>
        <end position="425"/>
    </location>
</feature>
<feature type="zinc finger region" description="C2H2-type 7" evidence="3">
    <location>
        <begin position="431"/>
        <end position="454"/>
    </location>
</feature>
<feature type="zinc finger region" description="C2H2-type 8" evidence="3">
    <location>
        <begin position="460"/>
        <end position="482"/>
    </location>
</feature>
<feature type="region of interest" description="Disordered" evidence="4">
    <location>
        <begin position="1"/>
        <end position="23"/>
    </location>
</feature>
<feature type="region of interest" description="Disordered" evidence="4">
    <location>
        <begin position="54"/>
        <end position="80"/>
    </location>
</feature>
<feature type="region of interest" description="Disordered" evidence="4">
    <location>
        <begin position="115"/>
        <end position="136"/>
    </location>
</feature>
<feature type="region of interest" description="Interaction with CTNNA2" evidence="1">
    <location>
        <begin position="371"/>
        <end position="455"/>
    </location>
</feature>
<feature type="compositionally biased region" description="Basic residues" evidence="4">
    <location>
        <begin position="1"/>
        <end position="14"/>
    </location>
</feature>
<feature type="modified residue" description="Phosphoserine" evidence="6">
    <location>
        <position position="60"/>
    </location>
</feature>
<feature type="modified residue" description="Phosphoserine" evidence="2">
    <location>
        <position position="88"/>
    </location>
</feature>
<feature type="cross-link" description="Glycyl lysine isopeptide (Lys-Gly) (interchain with G-Cter in SUMO2)" evidence="2">
    <location>
        <position position="76"/>
    </location>
</feature>
<feature type="cross-link" description="Glycyl lysine isopeptide (Lys-Gly) (interchain with G-Cter in SUMO2)" evidence="2">
    <location>
        <position position="177"/>
    </location>
</feature>
<feature type="cross-link" description="Glycyl lysine isopeptide (Lys-Gly) (interchain with G-Cter in SUMO2)" evidence="2">
    <location>
        <position position="181"/>
    </location>
</feature>
<feature type="cross-link" description="Glycyl lysine isopeptide (Lys-Gly) (interchain with G-Cter in SUMO2)" evidence="2">
    <location>
        <position position="226"/>
    </location>
</feature>
<feature type="sequence conflict" description="In Ref. 2; BAC33991." evidence="5" ref="2">
    <original>S</original>
    <variation>P</variation>
    <location>
        <position position="455"/>
    </location>
</feature>
<reference key="1">
    <citation type="journal article" date="2005" name="Exp. Cell Res.">
        <title>Nuclear translocation of alphaN-catenin by the novel zinc finger transcriptional repressor ZASC1.</title>
        <authorList>
            <person name="Bogaerts S."/>
            <person name="Vanlandschoot A."/>
            <person name="van Hengel J."/>
            <person name="van Roy F."/>
        </authorList>
    </citation>
    <scope>NUCLEOTIDE SEQUENCE [MRNA]</scope>
    <source>
        <strain>C57BL/6J</strain>
    </source>
</reference>
<reference key="2">
    <citation type="journal article" date="2005" name="Science">
        <title>The transcriptional landscape of the mammalian genome.</title>
        <authorList>
            <person name="Carninci P."/>
            <person name="Kasukawa T."/>
            <person name="Katayama S."/>
            <person name="Gough J."/>
            <person name="Frith M.C."/>
            <person name="Maeda N."/>
            <person name="Oyama R."/>
            <person name="Ravasi T."/>
            <person name="Lenhard B."/>
            <person name="Wells C."/>
            <person name="Kodzius R."/>
            <person name="Shimokawa K."/>
            <person name="Bajic V.B."/>
            <person name="Brenner S.E."/>
            <person name="Batalov S."/>
            <person name="Forrest A.R."/>
            <person name="Zavolan M."/>
            <person name="Davis M.J."/>
            <person name="Wilming L.G."/>
            <person name="Aidinis V."/>
            <person name="Allen J.E."/>
            <person name="Ambesi-Impiombato A."/>
            <person name="Apweiler R."/>
            <person name="Aturaliya R.N."/>
            <person name="Bailey T.L."/>
            <person name="Bansal M."/>
            <person name="Baxter L."/>
            <person name="Beisel K.W."/>
            <person name="Bersano T."/>
            <person name="Bono H."/>
            <person name="Chalk A.M."/>
            <person name="Chiu K.P."/>
            <person name="Choudhary V."/>
            <person name="Christoffels A."/>
            <person name="Clutterbuck D.R."/>
            <person name="Crowe M.L."/>
            <person name="Dalla E."/>
            <person name="Dalrymple B.P."/>
            <person name="de Bono B."/>
            <person name="Della Gatta G."/>
            <person name="di Bernardo D."/>
            <person name="Down T."/>
            <person name="Engstrom P."/>
            <person name="Fagiolini M."/>
            <person name="Faulkner G."/>
            <person name="Fletcher C.F."/>
            <person name="Fukushima T."/>
            <person name="Furuno M."/>
            <person name="Futaki S."/>
            <person name="Gariboldi M."/>
            <person name="Georgii-Hemming P."/>
            <person name="Gingeras T.R."/>
            <person name="Gojobori T."/>
            <person name="Green R.E."/>
            <person name="Gustincich S."/>
            <person name="Harbers M."/>
            <person name="Hayashi Y."/>
            <person name="Hensch T.K."/>
            <person name="Hirokawa N."/>
            <person name="Hill D."/>
            <person name="Huminiecki L."/>
            <person name="Iacono M."/>
            <person name="Ikeo K."/>
            <person name="Iwama A."/>
            <person name="Ishikawa T."/>
            <person name="Jakt M."/>
            <person name="Kanapin A."/>
            <person name="Katoh M."/>
            <person name="Kawasawa Y."/>
            <person name="Kelso J."/>
            <person name="Kitamura H."/>
            <person name="Kitano H."/>
            <person name="Kollias G."/>
            <person name="Krishnan S.P."/>
            <person name="Kruger A."/>
            <person name="Kummerfeld S.K."/>
            <person name="Kurochkin I.V."/>
            <person name="Lareau L.F."/>
            <person name="Lazarevic D."/>
            <person name="Lipovich L."/>
            <person name="Liu J."/>
            <person name="Liuni S."/>
            <person name="McWilliam S."/>
            <person name="Madan Babu M."/>
            <person name="Madera M."/>
            <person name="Marchionni L."/>
            <person name="Matsuda H."/>
            <person name="Matsuzawa S."/>
            <person name="Miki H."/>
            <person name="Mignone F."/>
            <person name="Miyake S."/>
            <person name="Morris K."/>
            <person name="Mottagui-Tabar S."/>
            <person name="Mulder N."/>
            <person name="Nakano N."/>
            <person name="Nakauchi H."/>
            <person name="Ng P."/>
            <person name="Nilsson R."/>
            <person name="Nishiguchi S."/>
            <person name="Nishikawa S."/>
            <person name="Nori F."/>
            <person name="Ohara O."/>
            <person name="Okazaki Y."/>
            <person name="Orlando V."/>
            <person name="Pang K.C."/>
            <person name="Pavan W.J."/>
            <person name="Pavesi G."/>
            <person name="Pesole G."/>
            <person name="Petrovsky N."/>
            <person name="Piazza S."/>
            <person name="Reed J."/>
            <person name="Reid J.F."/>
            <person name="Ring B.Z."/>
            <person name="Ringwald M."/>
            <person name="Rost B."/>
            <person name="Ruan Y."/>
            <person name="Salzberg S.L."/>
            <person name="Sandelin A."/>
            <person name="Schneider C."/>
            <person name="Schoenbach C."/>
            <person name="Sekiguchi K."/>
            <person name="Semple C.A."/>
            <person name="Seno S."/>
            <person name="Sessa L."/>
            <person name="Sheng Y."/>
            <person name="Shibata Y."/>
            <person name="Shimada H."/>
            <person name="Shimada K."/>
            <person name="Silva D."/>
            <person name="Sinclair B."/>
            <person name="Sperling S."/>
            <person name="Stupka E."/>
            <person name="Sugiura K."/>
            <person name="Sultana R."/>
            <person name="Takenaka Y."/>
            <person name="Taki K."/>
            <person name="Tammoja K."/>
            <person name="Tan S.L."/>
            <person name="Tang S."/>
            <person name="Taylor M.S."/>
            <person name="Tegner J."/>
            <person name="Teichmann S.A."/>
            <person name="Ueda H.R."/>
            <person name="van Nimwegen E."/>
            <person name="Verardo R."/>
            <person name="Wei C.L."/>
            <person name="Yagi K."/>
            <person name="Yamanishi H."/>
            <person name="Zabarovsky E."/>
            <person name="Zhu S."/>
            <person name="Zimmer A."/>
            <person name="Hide W."/>
            <person name="Bult C."/>
            <person name="Grimmond S.M."/>
            <person name="Teasdale R.D."/>
            <person name="Liu E.T."/>
            <person name="Brusic V."/>
            <person name="Quackenbush J."/>
            <person name="Wahlestedt C."/>
            <person name="Mattick J.S."/>
            <person name="Hume D.A."/>
            <person name="Kai C."/>
            <person name="Sasaki D."/>
            <person name="Tomaru Y."/>
            <person name="Fukuda S."/>
            <person name="Kanamori-Katayama M."/>
            <person name="Suzuki M."/>
            <person name="Aoki J."/>
            <person name="Arakawa T."/>
            <person name="Iida J."/>
            <person name="Imamura K."/>
            <person name="Itoh M."/>
            <person name="Kato T."/>
            <person name="Kawaji H."/>
            <person name="Kawagashira N."/>
            <person name="Kawashima T."/>
            <person name="Kojima M."/>
            <person name="Kondo S."/>
            <person name="Konno H."/>
            <person name="Nakano K."/>
            <person name="Ninomiya N."/>
            <person name="Nishio T."/>
            <person name="Okada M."/>
            <person name="Plessy C."/>
            <person name="Shibata K."/>
            <person name="Shiraki T."/>
            <person name="Suzuki S."/>
            <person name="Tagami M."/>
            <person name="Waki K."/>
            <person name="Watahiki A."/>
            <person name="Okamura-Oho Y."/>
            <person name="Suzuki H."/>
            <person name="Kawai J."/>
            <person name="Hayashizaki Y."/>
        </authorList>
    </citation>
    <scope>NUCLEOTIDE SEQUENCE [LARGE SCALE MRNA]</scope>
    <source>
        <strain>C57BL/6J</strain>
        <tissue>Head</tissue>
        <tissue>Hippocampus</tissue>
        <tissue>Testis</tissue>
    </source>
</reference>
<reference key="3">
    <citation type="submission" date="2005-07" db="EMBL/GenBank/DDBJ databases">
        <authorList>
            <person name="Mural R.J."/>
            <person name="Adams M.D."/>
            <person name="Myers E.W."/>
            <person name="Smith H.O."/>
            <person name="Venter J.C."/>
        </authorList>
    </citation>
    <scope>NUCLEOTIDE SEQUENCE [LARGE SCALE GENOMIC DNA]</scope>
</reference>
<reference key="4">
    <citation type="journal article" date="2007" name="Genome Res.">
        <title>Functional persistence of exonized mammalian-wide interspersed repeat elements (MIRs).</title>
        <authorList>
            <person name="Krull M."/>
            <person name="Petrusma M."/>
            <person name="Makalowski W."/>
            <person name="Brosius J."/>
            <person name="Schmitz J."/>
        </authorList>
    </citation>
    <scope>NUCLEOTIDE SEQUENCE [MRNA] OF 50-190</scope>
    <source>
        <strain>CD-1</strain>
    </source>
</reference>
<reference key="5">
    <citation type="journal article" date="2004" name="Genome Res.">
        <title>The status, quality, and expansion of the NIH full-length cDNA project: the Mammalian Gene Collection (MGC).</title>
        <authorList>
            <consortium name="The MGC Project Team"/>
        </authorList>
    </citation>
    <scope>NUCLEOTIDE SEQUENCE [LARGE SCALE MRNA] OF 116-485</scope>
    <source>
        <tissue>Mammary tumor</tissue>
    </source>
</reference>
<reference key="6">
    <citation type="journal article" date="2010" name="Cell">
        <title>A tissue-specific atlas of mouse protein phosphorylation and expression.</title>
        <authorList>
            <person name="Huttlin E.L."/>
            <person name="Jedrychowski M.P."/>
            <person name="Elias J.E."/>
            <person name="Goswami T."/>
            <person name="Rad R."/>
            <person name="Beausoleil S.A."/>
            <person name="Villen J."/>
            <person name="Haas W."/>
            <person name="Sowa M.E."/>
            <person name="Gygi S.P."/>
        </authorList>
    </citation>
    <scope>PHOSPHORYLATION [LARGE SCALE ANALYSIS] AT SER-60</scope>
    <scope>IDENTIFICATION BY MASS SPECTROMETRY [LARGE SCALE ANALYSIS]</scope>
    <source>
        <tissue>Brown adipose tissue</tissue>
        <tissue>Kidney</tissue>
        <tissue>Spleen</tissue>
    </source>
</reference>
<evidence type="ECO:0000250" key="1"/>
<evidence type="ECO:0000250" key="2">
    <source>
        <dbReference type="UniProtKB" id="Q9UID6"/>
    </source>
</evidence>
<evidence type="ECO:0000255" key="3">
    <source>
        <dbReference type="PROSITE-ProRule" id="PRU00042"/>
    </source>
</evidence>
<evidence type="ECO:0000256" key="4">
    <source>
        <dbReference type="SAM" id="MobiDB-lite"/>
    </source>
</evidence>
<evidence type="ECO:0000305" key="5"/>
<evidence type="ECO:0007744" key="6">
    <source>
    </source>
</evidence>
<sequence>MNEYPKKRKRKTLHPSRYSDSSGISRIADGVSGIFSDHCYSVCSMRQPDLKYFDNKDDDSDPETANDLPKFADGTKARNRNQSYLVPSPVLRILDHTVFSTEKSTEVEICDEECASPESVHQHTQEESPIEVHTSEDVPIAVEVHAISEDYDIEAENNSSESLQDQADEEPPAKLCKILDKGQALNVTAQQKWPLLRANSSGLYKCELCEFNSKYFSDLKQHVILKHKRTDSNVCRVCKESFSTNMLLIEHAKLHEEDPYICKYCDYKTVIFENLSQHIADTHFSDHLYWCEQCDVQFSSSSELYLHFQEHSRDEQYLCQFCEHETGDPEDLHSHVVNEHARRLIELSDKCGSGGHGQCSLLSKITFDKCKNFFVCQVCGFRSRLHTNVNRHVAIEHTKIFPHVCDDCGKGFSSMLEYCKHLNSHLSEGIYLCQYCEYSTGQIDDLKIHLDFKHSADLPHKCSECLMRFGNERDLLGHLQVHETT</sequence>
<dbReference type="EMBL" id="AY736186">
    <property type="protein sequence ID" value="AAU85844.1"/>
    <property type="molecule type" value="mRNA"/>
</dbReference>
<dbReference type="EMBL" id="AK049934">
    <property type="protein sequence ID" value="BAC33991.2"/>
    <property type="molecule type" value="mRNA"/>
</dbReference>
<dbReference type="EMBL" id="AK076145">
    <property type="protein sequence ID" value="BAC36215.1"/>
    <property type="molecule type" value="mRNA"/>
</dbReference>
<dbReference type="EMBL" id="AK076837">
    <property type="protein sequence ID" value="BAC36501.1"/>
    <property type="molecule type" value="mRNA"/>
</dbReference>
<dbReference type="EMBL" id="AK078000">
    <property type="protein sequence ID" value="BAC37096.1"/>
    <property type="molecule type" value="mRNA"/>
</dbReference>
<dbReference type="EMBL" id="CH466530">
    <property type="protein sequence ID" value="EDL34991.1"/>
    <property type="molecule type" value="Genomic_DNA"/>
</dbReference>
<dbReference type="EMBL" id="CH466530">
    <property type="protein sequence ID" value="EDL34994.1"/>
    <property type="molecule type" value="Genomic_DNA"/>
</dbReference>
<dbReference type="EMBL" id="CH466530">
    <property type="protein sequence ID" value="EDL34995.1"/>
    <property type="molecule type" value="Genomic_DNA"/>
</dbReference>
<dbReference type="EMBL" id="CH466530">
    <property type="protein sequence ID" value="EDL34996.1"/>
    <property type="molecule type" value="Genomic_DNA"/>
</dbReference>
<dbReference type="EMBL" id="DQ323614">
    <property type="protein sequence ID" value="ABD27861.1"/>
    <property type="molecule type" value="mRNA"/>
</dbReference>
<dbReference type="EMBL" id="BC003941">
    <property type="protein sequence ID" value="AAH03941.1"/>
    <property type="molecule type" value="mRNA"/>
</dbReference>
<dbReference type="CCDS" id="CCDS17295.1"/>
<dbReference type="RefSeq" id="NP_001155290.1">
    <property type="nucleotide sequence ID" value="NM_001161818.1"/>
</dbReference>
<dbReference type="RefSeq" id="NP_653102.1">
    <property type="nucleotide sequence ID" value="NM_144519.4"/>
</dbReference>
<dbReference type="RefSeq" id="XP_006535590.1">
    <property type="nucleotide sequence ID" value="XM_006535527.3"/>
</dbReference>
<dbReference type="RefSeq" id="XP_006535591.1">
    <property type="nucleotide sequence ID" value="XM_006535528.2"/>
</dbReference>
<dbReference type="RefSeq" id="XP_006535592.1">
    <property type="nucleotide sequence ID" value="XM_006535529.3"/>
</dbReference>
<dbReference type="SMR" id="Q99KZ6"/>
<dbReference type="FunCoup" id="Q99KZ6">
    <property type="interactions" value="3505"/>
</dbReference>
<dbReference type="STRING" id="10090.ENSMUSP00000141341"/>
<dbReference type="iPTMnet" id="Q99KZ6"/>
<dbReference type="PhosphoSitePlus" id="Q99KZ6"/>
<dbReference type="jPOST" id="Q99KZ6"/>
<dbReference type="PaxDb" id="10090-ENSMUSP00000029203"/>
<dbReference type="PeptideAtlas" id="Q99KZ6"/>
<dbReference type="ProteomicsDB" id="299593"/>
<dbReference type="Pumba" id="Q99KZ6"/>
<dbReference type="Antibodypedia" id="46810">
    <property type="antibodies" value="83 antibodies from 20 providers"/>
</dbReference>
<dbReference type="DNASU" id="67778"/>
<dbReference type="Ensembl" id="ENSMUST00000029203.13">
    <property type="protein sequence ID" value="ENSMUSP00000029203.8"/>
    <property type="gene ID" value="ENSMUSG00000027667.14"/>
</dbReference>
<dbReference type="Ensembl" id="ENSMUST00000191783.6">
    <property type="protein sequence ID" value="ENSMUSP00000141446.2"/>
    <property type="gene ID" value="ENSMUSG00000027667.14"/>
</dbReference>
<dbReference type="Ensembl" id="ENSMUST00000193287.6">
    <property type="protein sequence ID" value="ENSMUSP00000141341.2"/>
    <property type="gene ID" value="ENSMUSG00000027667.14"/>
</dbReference>
<dbReference type="GeneID" id="67778"/>
<dbReference type="KEGG" id="mmu:67778"/>
<dbReference type="UCSC" id="uc008owf.2">
    <property type="organism name" value="mouse"/>
</dbReference>
<dbReference type="AGR" id="MGI:1915028"/>
<dbReference type="CTD" id="67778"/>
<dbReference type="MGI" id="MGI:1915028">
    <property type="gene designation" value="Zfp639"/>
</dbReference>
<dbReference type="VEuPathDB" id="HostDB:ENSMUSG00000027667"/>
<dbReference type="eggNOG" id="KOG1721">
    <property type="taxonomic scope" value="Eukaryota"/>
</dbReference>
<dbReference type="GeneTree" id="ENSGT00940000156335"/>
<dbReference type="HOGENOM" id="CLU_569800_0_0_1"/>
<dbReference type="InParanoid" id="Q99KZ6"/>
<dbReference type="OMA" id="PDINRGR"/>
<dbReference type="OrthoDB" id="6077919at2759"/>
<dbReference type="PhylomeDB" id="Q99KZ6"/>
<dbReference type="TreeFam" id="TF335557"/>
<dbReference type="BioGRID-ORCS" id="67778">
    <property type="hits" value="2 hits in 78 CRISPR screens"/>
</dbReference>
<dbReference type="ChiTaRS" id="Zfp639">
    <property type="organism name" value="mouse"/>
</dbReference>
<dbReference type="PRO" id="PR:Q99KZ6"/>
<dbReference type="Proteomes" id="UP000000589">
    <property type="component" value="Chromosome 3"/>
</dbReference>
<dbReference type="RNAct" id="Q99KZ6">
    <property type="molecule type" value="protein"/>
</dbReference>
<dbReference type="Bgee" id="ENSMUSG00000027667">
    <property type="expression patterns" value="Expressed in spermatocyte and 272 other cell types or tissues"/>
</dbReference>
<dbReference type="ExpressionAtlas" id="Q99KZ6">
    <property type="expression patterns" value="baseline and differential"/>
</dbReference>
<dbReference type="GO" id="GO:0005654">
    <property type="term" value="C:nucleoplasm"/>
    <property type="evidence" value="ECO:0007669"/>
    <property type="project" value="Ensembl"/>
</dbReference>
<dbReference type="GO" id="GO:0005634">
    <property type="term" value="C:nucleus"/>
    <property type="evidence" value="ECO:0000250"/>
    <property type="project" value="UniProtKB"/>
</dbReference>
<dbReference type="GO" id="GO:0001228">
    <property type="term" value="F:DNA-binding transcription activator activity, RNA polymerase II-specific"/>
    <property type="evidence" value="ECO:0007669"/>
    <property type="project" value="Ensembl"/>
</dbReference>
<dbReference type="GO" id="GO:0003700">
    <property type="term" value="F:DNA-binding transcription factor activity"/>
    <property type="evidence" value="ECO:0000250"/>
    <property type="project" value="UniProtKB"/>
</dbReference>
<dbReference type="GO" id="GO:0000978">
    <property type="term" value="F:RNA polymerase II cis-regulatory region sequence-specific DNA binding"/>
    <property type="evidence" value="ECO:0007669"/>
    <property type="project" value="Ensembl"/>
</dbReference>
<dbReference type="GO" id="GO:0000976">
    <property type="term" value="F:transcription cis-regulatory region binding"/>
    <property type="evidence" value="ECO:0000250"/>
    <property type="project" value="UniProtKB"/>
</dbReference>
<dbReference type="GO" id="GO:0008270">
    <property type="term" value="F:zinc ion binding"/>
    <property type="evidence" value="ECO:0007669"/>
    <property type="project" value="UniProtKB-KW"/>
</dbReference>
<dbReference type="GO" id="GO:0043922">
    <property type="term" value="P:negative regulation by host of viral transcription"/>
    <property type="evidence" value="ECO:0000250"/>
    <property type="project" value="UniProtKB"/>
</dbReference>
<dbReference type="GO" id="GO:0045892">
    <property type="term" value="P:negative regulation of DNA-templated transcription"/>
    <property type="evidence" value="ECO:0000250"/>
    <property type="project" value="UniProtKB"/>
</dbReference>
<dbReference type="GO" id="GO:0043923">
    <property type="term" value="P:positive regulation by host of viral transcription"/>
    <property type="evidence" value="ECO:0000250"/>
    <property type="project" value="UniProtKB"/>
</dbReference>
<dbReference type="GO" id="GO:0030307">
    <property type="term" value="P:positive regulation of cell growth"/>
    <property type="evidence" value="ECO:0000250"/>
    <property type="project" value="UniProtKB"/>
</dbReference>
<dbReference type="GO" id="GO:0046718">
    <property type="term" value="P:symbiont entry into host cell"/>
    <property type="evidence" value="ECO:0000250"/>
    <property type="project" value="UniProtKB"/>
</dbReference>
<dbReference type="FunFam" id="3.30.160.60:FF:000776">
    <property type="entry name" value="Zinc finger protein 639"/>
    <property type="match status" value="1"/>
</dbReference>
<dbReference type="FunFam" id="3.30.160.60:FF:001103">
    <property type="entry name" value="Zinc finger protein 639"/>
    <property type="match status" value="1"/>
</dbReference>
<dbReference type="FunFam" id="3.30.160.60:FF:001200">
    <property type="entry name" value="zinc finger protein 639"/>
    <property type="match status" value="1"/>
</dbReference>
<dbReference type="FunFam" id="3.30.160.60:FF:001222">
    <property type="entry name" value="zinc finger protein 639"/>
    <property type="match status" value="1"/>
</dbReference>
<dbReference type="Gene3D" id="3.30.160.60">
    <property type="entry name" value="Classic Zinc Finger"/>
    <property type="match status" value="4"/>
</dbReference>
<dbReference type="InterPro" id="IPR050589">
    <property type="entry name" value="Ikaros_C2H2-ZF"/>
</dbReference>
<dbReference type="InterPro" id="IPR036236">
    <property type="entry name" value="Znf_C2H2_sf"/>
</dbReference>
<dbReference type="InterPro" id="IPR013087">
    <property type="entry name" value="Znf_C2H2_type"/>
</dbReference>
<dbReference type="PANTHER" id="PTHR24404">
    <property type="entry name" value="ZINC FINGER PROTEIN"/>
    <property type="match status" value="1"/>
</dbReference>
<dbReference type="Pfam" id="PF00096">
    <property type="entry name" value="zf-C2H2"/>
    <property type="match status" value="1"/>
</dbReference>
<dbReference type="SMART" id="SM00355">
    <property type="entry name" value="ZnF_C2H2"/>
    <property type="match status" value="9"/>
</dbReference>
<dbReference type="SUPFAM" id="SSF57667">
    <property type="entry name" value="beta-beta-alpha zinc fingers"/>
    <property type="match status" value="3"/>
</dbReference>
<dbReference type="PROSITE" id="PS00028">
    <property type="entry name" value="ZINC_FINGER_C2H2_1"/>
    <property type="match status" value="4"/>
</dbReference>
<dbReference type="PROSITE" id="PS50157">
    <property type="entry name" value="ZINC_FINGER_C2H2_2"/>
    <property type="match status" value="5"/>
</dbReference>
<protein>
    <recommendedName>
        <fullName>Zinc finger protein 639</fullName>
    </recommendedName>
    <alternativeName>
        <fullName>Zinc finger protein ZASC1</fullName>
    </alternativeName>
</protein>
<accession>Q99KZ6</accession>
<accession>A9X400</accession>
<accession>Q8BWU9</accession>
<proteinExistence type="evidence at protein level"/>
<keyword id="KW-0238">DNA-binding</keyword>
<keyword id="KW-1017">Isopeptide bond</keyword>
<keyword id="KW-0479">Metal-binding</keyword>
<keyword id="KW-0539">Nucleus</keyword>
<keyword id="KW-0597">Phosphoprotein</keyword>
<keyword id="KW-1185">Reference proteome</keyword>
<keyword id="KW-0677">Repeat</keyword>
<keyword id="KW-0678">Repressor</keyword>
<keyword id="KW-0804">Transcription</keyword>
<keyword id="KW-0805">Transcription regulation</keyword>
<keyword id="KW-0832">Ubl conjugation</keyword>
<keyword id="KW-0862">Zinc</keyword>
<keyword id="KW-0863">Zinc-finger</keyword>
<organism>
    <name type="scientific">Mus musculus</name>
    <name type="common">Mouse</name>
    <dbReference type="NCBI Taxonomy" id="10090"/>
    <lineage>
        <taxon>Eukaryota</taxon>
        <taxon>Metazoa</taxon>
        <taxon>Chordata</taxon>
        <taxon>Craniata</taxon>
        <taxon>Vertebrata</taxon>
        <taxon>Euteleostomi</taxon>
        <taxon>Mammalia</taxon>
        <taxon>Eutheria</taxon>
        <taxon>Euarchontoglires</taxon>
        <taxon>Glires</taxon>
        <taxon>Rodentia</taxon>
        <taxon>Myomorpha</taxon>
        <taxon>Muroidea</taxon>
        <taxon>Muridae</taxon>
        <taxon>Murinae</taxon>
        <taxon>Mus</taxon>
        <taxon>Mus</taxon>
    </lineage>
</organism>
<name>ZN639_MOUSE</name>
<gene>
    <name type="primary">Znf639</name>
    <name type="synonym">Zasc1</name>
    <name type="synonym">Zfp639</name>
</gene>